<comment type="function">
    <text evidence="1 5">Catalyzes the conversion of O-acetylserine (OAS) to cysteine through the elimination of acetate and addition of hydrogen sulfide.</text>
</comment>
<comment type="catalytic activity">
    <reaction evidence="1">
        <text>O-acetyl-L-serine + hydrogen sulfide = L-cysteine + acetate</text>
        <dbReference type="Rhea" id="RHEA:14829"/>
        <dbReference type="ChEBI" id="CHEBI:29919"/>
        <dbReference type="ChEBI" id="CHEBI:30089"/>
        <dbReference type="ChEBI" id="CHEBI:35235"/>
        <dbReference type="ChEBI" id="CHEBI:58340"/>
        <dbReference type="EC" id="2.5.1.47"/>
    </reaction>
</comment>
<comment type="cofactor">
    <cofactor evidence="1">
        <name>pyridoxal 5'-phosphate</name>
        <dbReference type="ChEBI" id="CHEBI:597326"/>
    </cofactor>
</comment>
<comment type="pathway">
    <text evidence="2">Amino-acid biosynthesis; L-cysteine biosynthesis; L-cysteine from L-serine: step 2/2.</text>
</comment>
<comment type="subunit">
    <text evidence="1">Homodimer.</text>
</comment>
<comment type="induction">
    <text evidence="2">Transcriptionally induced in the absence of sulfur, requires CysR for transcription. Part of the srpG-srpH-srpI operon.</text>
</comment>
<comment type="similarity">
    <text evidence="4">Belongs to the cysteine synthase/cystathionine beta-synthase family.</text>
</comment>
<dbReference type="EC" id="2.5.1.47" evidence="1"/>
<dbReference type="EMBL" id="U23436">
    <property type="protein sequence ID" value="AAA86725.1"/>
    <property type="molecule type" value="Genomic_DNA"/>
</dbReference>
<dbReference type="EMBL" id="AF441790">
    <property type="protein sequence ID" value="AAM81167.1"/>
    <property type="molecule type" value="Genomic_DNA"/>
</dbReference>
<dbReference type="EMBL" id="CP000101">
    <property type="protein sequence ID" value="ABB58693.1"/>
    <property type="molecule type" value="Genomic_DNA"/>
</dbReference>
<dbReference type="RefSeq" id="NP_665779.1">
    <property type="nucleotide sequence ID" value="NC_004073.2"/>
</dbReference>
<dbReference type="SMR" id="Q59966"/>
<dbReference type="PaxDb" id="1140-Synpcc7942_B2664"/>
<dbReference type="KEGG" id="syf:Synpcc7942_B2664"/>
<dbReference type="eggNOG" id="COG0031">
    <property type="taxonomic scope" value="Bacteria"/>
</dbReference>
<dbReference type="HOGENOM" id="CLU_021018_1_0_3"/>
<dbReference type="OrthoDB" id="9808024at2"/>
<dbReference type="BioCyc" id="SYNEL:SYNPCC7942_B2664-MONOMER"/>
<dbReference type="UniPathway" id="UPA00136">
    <property type="reaction ID" value="UER00200"/>
</dbReference>
<dbReference type="Proteomes" id="UP000889800">
    <property type="component" value="Plasmid pANL"/>
</dbReference>
<dbReference type="GO" id="GO:0004124">
    <property type="term" value="F:cysteine synthase activity"/>
    <property type="evidence" value="ECO:0007669"/>
    <property type="project" value="UniProtKB-EC"/>
</dbReference>
<dbReference type="GO" id="GO:0006535">
    <property type="term" value="P:cysteine biosynthetic process from serine"/>
    <property type="evidence" value="ECO:0007669"/>
    <property type="project" value="InterPro"/>
</dbReference>
<dbReference type="CDD" id="cd01561">
    <property type="entry name" value="CBS_like"/>
    <property type="match status" value="1"/>
</dbReference>
<dbReference type="FunFam" id="3.40.50.1100:FF:000002">
    <property type="entry name" value="Cysteine synthase"/>
    <property type="match status" value="1"/>
</dbReference>
<dbReference type="FunFam" id="3.40.50.1100:FF:000067">
    <property type="entry name" value="Cysteine synthase"/>
    <property type="match status" value="1"/>
</dbReference>
<dbReference type="Gene3D" id="3.40.50.1100">
    <property type="match status" value="2"/>
</dbReference>
<dbReference type="InterPro" id="IPR005856">
    <property type="entry name" value="Cys_synth"/>
</dbReference>
<dbReference type="InterPro" id="IPR050214">
    <property type="entry name" value="Cys_Synth/Cystath_Beta-Synth"/>
</dbReference>
<dbReference type="InterPro" id="IPR005859">
    <property type="entry name" value="CysK"/>
</dbReference>
<dbReference type="InterPro" id="IPR001216">
    <property type="entry name" value="P-phosphate_BS"/>
</dbReference>
<dbReference type="InterPro" id="IPR001926">
    <property type="entry name" value="TrpB-like_PALP"/>
</dbReference>
<dbReference type="InterPro" id="IPR036052">
    <property type="entry name" value="TrpB-like_PALP_sf"/>
</dbReference>
<dbReference type="NCBIfam" id="TIGR01139">
    <property type="entry name" value="cysK"/>
    <property type="match status" value="1"/>
</dbReference>
<dbReference type="NCBIfam" id="TIGR01136">
    <property type="entry name" value="cysKM"/>
    <property type="match status" value="1"/>
</dbReference>
<dbReference type="NCBIfam" id="NF007989">
    <property type="entry name" value="PRK10717.1"/>
    <property type="match status" value="1"/>
</dbReference>
<dbReference type="PANTHER" id="PTHR10314">
    <property type="entry name" value="CYSTATHIONINE BETA-SYNTHASE"/>
    <property type="match status" value="1"/>
</dbReference>
<dbReference type="Pfam" id="PF00291">
    <property type="entry name" value="PALP"/>
    <property type="match status" value="1"/>
</dbReference>
<dbReference type="SUPFAM" id="SSF53686">
    <property type="entry name" value="Tryptophan synthase beta subunit-like PLP-dependent enzymes"/>
    <property type="match status" value="1"/>
</dbReference>
<dbReference type="PROSITE" id="PS00901">
    <property type="entry name" value="CYS_SYNTHASE"/>
    <property type="match status" value="1"/>
</dbReference>
<organism>
    <name type="scientific">Synechococcus elongatus (strain ATCC 33912 / PCC 7942 / FACHB-805)</name>
    <name type="common">Anacystis nidulans R2</name>
    <dbReference type="NCBI Taxonomy" id="1140"/>
    <lineage>
        <taxon>Bacteria</taxon>
        <taxon>Bacillati</taxon>
        <taxon>Cyanobacteriota</taxon>
        <taxon>Cyanophyceae</taxon>
        <taxon>Synechococcales</taxon>
        <taxon>Synechococcaceae</taxon>
        <taxon>Synechococcus</taxon>
    </lineage>
</organism>
<proteinExistence type="evidence at transcript level"/>
<geneLocation type="plasmid">
    <name>pANL</name>
</geneLocation>
<accession>Q59966</accession>
<accession>Q7BA84</accession>
<evidence type="ECO:0000250" key="1">
    <source>
        <dbReference type="UniProtKB" id="P9WP55"/>
    </source>
</evidence>
<evidence type="ECO:0000269" key="2">
    <source>
    </source>
</evidence>
<evidence type="ECO:0000303" key="3">
    <source>
    </source>
</evidence>
<evidence type="ECO:0000305" key="4"/>
<evidence type="ECO:0000305" key="5">
    <source>
    </source>
</evidence>
<keyword id="KW-0028">Amino-acid biosynthesis</keyword>
<keyword id="KW-0198">Cysteine biosynthesis</keyword>
<keyword id="KW-0614">Plasmid</keyword>
<keyword id="KW-0663">Pyridoxal phosphate</keyword>
<keyword id="KW-1185">Reference proteome</keyword>
<keyword id="KW-0808">Transferase</keyword>
<gene>
    <name type="primary">srpG</name>
    <name type="ordered locus">Synpcc7942_B2664</name>
    <name type="ORF">pANL40</name>
</gene>
<sequence length="329" mass="34601">MSTSGTFFADNSQTIGKTPLVRLNRIVKGAPATVLAKIEGRNPAYSVKCRIGAAMIWDAEQRGLLGPGKELIEPTSGNTGIALAFVAAARGIPLTLTMPETMSLERRKLLAAYGAKLVLTEGVKGMTGAVRRAEDIAASDPDRYVLLQQFRNPANPAIHEQTTGPEIWEDTGGAIDILVSGVGTGGTITGVSRYIKQTQGKPILSVAVEPEASPVISQQRSGLPLKPGPHKIQGIGAGFIPENLDLSLVDQVERVSNEEAIAYARRLAQEEGLISGISCGAAVAAAVRLAQQSEHAGKTIVVVLPDSGERYLSTALFDGIFNEQGLAVV</sequence>
<protein>
    <recommendedName>
        <fullName>Cysteine synthase</fullName>
        <shortName>CSase</shortName>
        <ecNumber evidence="1">2.5.1.47</ecNumber>
    </recommendedName>
    <alternativeName>
        <fullName evidence="3">O-acetylserine (thiol)-lyase</fullName>
        <shortName>OAS-TL</shortName>
    </alternativeName>
    <alternativeName>
        <fullName>O-acetylserine sulfhydrylase</fullName>
    </alternativeName>
</protein>
<reference key="1">
    <citation type="journal article" date="1995" name="Mol. Gen. Genet.">
        <title>Two enzymes together capable of cysteine biosynthesis are encoded on a cyanobacterial plasmid.</title>
        <authorList>
            <person name="Nicholson M.L."/>
            <person name="Gaasenbeek M."/>
            <person name="Laudenbach D.E."/>
        </authorList>
    </citation>
    <scope>NUCLEOTIDE SEQUENCE [GENOMIC DNA]</scope>
    <scope>FUNCTION</scope>
    <scope>INDUCTION BY SULFUR STARVATION</scope>
    <scope>PATHWAY</scope>
    <source>
        <strain>ATCC 33912 / PCC 7942 / FACHB-805</strain>
        <plasmid>pANL</plasmid>
    </source>
</reference>
<reference key="2">
    <citation type="submission" date="2004-05" db="EMBL/GenBank/DDBJ databases">
        <title>pANL, the large plasmid of Synechococcus elongatus PCC 7942.</title>
        <authorList>
            <person name="Holtman C.K."/>
            <person name="Chen Y."/>
            <person name="Sandoval P."/>
            <person name="Socias T."/>
            <person name="Mohler B.J."/>
            <person name="Youderian P."/>
            <person name="Golden S.S."/>
        </authorList>
    </citation>
    <scope>NUCLEOTIDE SEQUENCE [GENOMIC DNA]</scope>
    <source>
        <strain>ATCC 33912 / PCC 7942 / FACHB-805</strain>
        <plasmid>pANL</plasmid>
    </source>
</reference>
<reference key="3">
    <citation type="submission" date="2005-08" db="EMBL/GenBank/DDBJ databases">
        <title>Complete sequence of plasmid 1 of Synechococcus elongatus PCC 7942.</title>
        <authorList>
            <consortium name="US DOE Joint Genome Institute"/>
            <person name="Copeland A."/>
            <person name="Lucas S."/>
            <person name="Lapidus A."/>
            <person name="Barry K."/>
            <person name="Detter J.C."/>
            <person name="Glavina T."/>
            <person name="Hammon N."/>
            <person name="Israni S."/>
            <person name="Pitluck S."/>
            <person name="Schmutz J."/>
            <person name="Larimer F."/>
            <person name="Land M."/>
            <person name="Kyrpides N."/>
            <person name="Lykidis A."/>
            <person name="Golden S."/>
            <person name="Richardson P."/>
        </authorList>
    </citation>
    <scope>NUCLEOTIDE SEQUENCE [LARGE SCALE GENOMIC DNA]</scope>
    <source>
        <strain>ATCC 33912 / PCC 7942 / FACHB-805</strain>
        <plasmid>pANL</plasmid>
    </source>
</reference>
<name>CYSK_SYNE7</name>
<feature type="chain" id="PRO_0000167115" description="Cysteine synthase">
    <location>
        <begin position="1"/>
        <end position="329"/>
    </location>
</feature>
<feature type="binding site" evidence="1">
    <location>
        <position position="78"/>
    </location>
    <ligand>
        <name>pyridoxal 5'-phosphate</name>
        <dbReference type="ChEBI" id="CHEBI:597326"/>
    </ligand>
</feature>
<feature type="binding site" evidence="1">
    <location>
        <begin position="183"/>
        <end position="187"/>
    </location>
    <ligand>
        <name>pyridoxal 5'-phosphate</name>
        <dbReference type="ChEBI" id="CHEBI:597326"/>
    </ligand>
</feature>
<feature type="binding site" evidence="1">
    <location>
        <position position="278"/>
    </location>
    <ligand>
        <name>pyridoxal 5'-phosphate</name>
        <dbReference type="ChEBI" id="CHEBI:597326"/>
    </ligand>
</feature>
<feature type="modified residue" description="N6-(pyridoxal phosphate)lysine" evidence="1">
    <location>
        <position position="48"/>
    </location>
</feature>